<sequence length="206" mass="24569">MIDFDGYRPNVGIVICNKAGQVLWAKRFGQNSWQFPQGGINEGENIETAMYRELYEEVGLTKKDVRLLWASKYWLKYKLPKRLVRSDGSQPVCIGQKQRWFLLQLLSDENLIDLKTTKSPEFDGWRWVSFWYPVRQVVSFKRDVYRKVMKEFAGVLLNESKKPETVEKPRVERTEKRDFQKRDNQKREFRKSARTWNNSHQKGKAQ</sequence>
<keyword id="KW-0378">Hydrolase</keyword>
<organism>
    <name type="scientific">Actinobacillus pleuropneumoniae serotype 3 (strain JL03)</name>
    <dbReference type="NCBI Taxonomy" id="434271"/>
    <lineage>
        <taxon>Bacteria</taxon>
        <taxon>Pseudomonadati</taxon>
        <taxon>Pseudomonadota</taxon>
        <taxon>Gammaproteobacteria</taxon>
        <taxon>Pasteurellales</taxon>
        <taxon>Pasteurellaceae</taxon>
        <taxon>Actinobacillus</taxon>
    </lineage>
</organism>
<gene>
    <name evidence="1" type="primary">rppH</name>
    <name evidence="1" type="synonym">nudH</name>
    <name type="ordered locus">APJL_1940</name>
</gene>
<proteinExistence type="inferred from homology"/>
<comment type="function">
    <text evidence="1">Accelerates the degradation of transcripts by removing pyrophosphate from the 5'-end of triphosphorylated RNA, leading to a more labile monophosphorylated state that can stimulate subsequent ribonuclease cleavage.</text>
</comment>
<comment type="cofactor">
    <cofactor evidence="1">
        <name>a divalent metal cation</name>
        <dbReference type="ChEBI" id="CHEBI:60240"/>
    </cofactor>
</comment>
<comment type="similarity">
    <text evidence="1">Belongs to the Nudix hydrolase family. RppH subfamily.</text>
</comment>
<protein>
    <recommendedName>
        <fullName evidence="1">RNA pyrophosphohydrolase</fullName>
        <ecNumber evidence="1">3.6.1.-</ecNumber>
    </recommendedName>
    <alternativeName>
        <fullName evidence="1">(Di)nucleoside polyphosphate hydrolase</fullName>
    </alternativeName>
</protein>
<evidence type="ECO:0000255" key="1">
    <source>
        <dbReference type="HAMAP-Rule" id="MF_00298"/>
    </source>
</evidence>
<evidence type="ECO:0000256" key="2">
    <source>
        <dbReference type="SAM" id="MobiDB-lite"/>
    </source>
</evidence>
<reference key="1">
    <citation type="journal article" date="2008" name="PLoS ONE">
        <title>Genome biology of Actinobacillus pleuropneumoniae JL03, an isolate of serotype 3 prevalent in China.</title>
        <authorList>
            <person name="Xu Z."/>
            <person name="Zhou Y."/>
            <person name="Li L."/>
            <person name="Zhou R."/>
            <person name="Xiao S."/>
            <person name="Wan Y."/>
            <person name="Zhang S."/>
            <person name="Wang K."/>
            <person name="Li W."/>
            <person name="Li L."/>
            <person name="Jin H."/>
            <person name="Kang M."/>
            <person name="Dalai B."/>
            <person name="Li T."/>
            <person name="Liu L."/>
            <person name="Cheng Y."/>
            <person name="Zhang L."/>
            <person name="Xu T."/>
            <person name="Zheng H."/>
            <person name="Pu S."/>
            <person name="Wang B."/>
            <person name="Gu W."/>
            <person name="Zhang X.L."/>
            <person name="Zhu G.-F."/>
            <person name="Wang S."/>
            <person name="Zhao G.-P."/>
            <person name="Chen H."/>
        </authorList>
    </citation>
    <scope>NUCLEOTIDE SEQUENCE [LARGE SCALE GENOMIC DNA]</scope>
    <source>
        <strain>JL03</strain>
    </source>
</reference>
<accession>B0BTH6</accession>
<name>RPPH_ACTPJ</name>
<dbReference type="EC" id="3.6.1.-" evidence="1"/>
<dbReference type="EMBL" id="CP000687">
    <property type="protein sequence ID" value="ABY70490.1"/>
    <property type="molecule type" value="Genomic_DNA"/>
</dbReference>
<dbReference type="RefSeq" id="WP_005599600.1">
    <property type="nucleotide sequence ID" value="NC_010278.1"/>
</dbReference>
<dbReference type="SMR" id="B0BTH6"/>
<dbReference type="GeneID" id="48600201"/>
<dbReference type="KEGG" id="apj:APJL_1940"/>
<dbReference type="HOGENOM" id="CLU_087195_3_2_6"/>
<dbReference type="Proteomes" id="UP000008547">
    <property type="component" value="Chromosome"/>
</dbReference>
<dbReference type="GO" id="GO:0005737">
    <property type="term" value="C:cytoplasm"/>
    <property type="evidence" value="ECO:0007669"/>
    <property type="project" value="TreeGrafter"/>
</dbReference>
<dbReference type="GO" id="GO:0034353">
    <property type="term" value="F:mRNA 5'-diphosphatase activity"/>
    <property type="evidence" value="ECO:0007669"/>
    <property type="project" value="TreeGrafter"/>
</dbReference>
<dbReference type="GO" id="GO:0006402">
    <property type="term" value="P:mRNA catabolic process"/>
    <property type="evidence" value="ECO:0007669"/>
    <property type="project" value="TreeGrafter"/>
</dbReference>
<dbReference type="CDD" id="cd03671">
    <property type="entry name" value="NUDIX_Ap4A_hydrolase_plant_like"/>
    <property type="match status" value="1"/>
</dbReference>
<dbReference type="FunFam" id="3.90.79.10:FF:000001">
    <property type="entry name" value="RNA pyrophosphohydrolase"/>
    <property type="match status" value="1"/>
</dbReference>
<dbReference type="Gene3D" id="3.90.79.10">
    <property type="entry name" value="Nucleoside Triphosphate Pyrophosphohydrolase"/>
    <property type="match status" value="1"/>
</dbReference>
<dbReference type="HAMAP" id="MF_00298">
    <property type="entry name" value="Nudix_RppH"/>
    <property type="match status" value="1"/>
</dbReference>
<dbReference type="InterPro" id="IPR020476">
    <property type="entry name" value="Nudix_hydrolase"/>
</dbReference>
<dbReference type="InterPro" id="IPR015797">
    <property type="entry name" value="NUDIX_hydrolase-like_dom_sf"/>
</dbReference>
<dbReference type="InterPro" id="IPR020084">
    <property type="entry name" value="NUDIX_hydrolase_CS"/>
</dbReference>
<dbReference type="InterPro" id="IPR000086">
    <property type="entry name" value="NUDIX_hydrolase_dom"/>
</dbReference>
<dbReference type="InterPro" id="IPR022927">
    <property type="entry name" value="RppH"/>
</dbReference>
<dbReference type="NCBIfam" id="NF001934">
    <property type="entry name" value="PRK00714.1-1"/>
    <property type="match status" value="1"/>
</dbReference>
<dbReference type="NCBIfam" id="NF001937">
    <property type="entry name" value="PRK00714.1-4"/>
    <property type="match status" value="1"/>
</dbReference>
<dbReference type="NCBIfam" id="NF001938">
    <property type="entry name" value="PRK00714.1-5"/>
    <property type="match status" value="1"/>
</dbReference>
<dbReference type="PANTHER" id="PTHR23114">
    <property type="entry name" value="M7GPPPN-MRNA HYDROLASE"/>
    <property type="match status" value="1"/>
</dbReference>
<dbReference type="PANTHER" id="PTHR23114:SF17">
    <property type="entry name" value="M7GPPPN-MRNA HYDROLASE"/>
    <property type="match status" value="1"/>
</dbReference>
<dbReference type="Pfam" id="PF00293">
    <property type="entry name" value="NUDIX"/>
    <property type="match status" value="1"/>
</dbReference>
<dbReference type="PRINTS" id="PR00502">
    <property type="entry name" value="NUDIXFAMILY"/>
</dbReference>
<dbReference type="SUPFAM" id="SSF55811">
    <property type="entry name" value="Nudix"/>
    <property type="match status" value="1"/>
</dbReference>
<dbReference type="PROSITE" id="PS51462">
    <property type="entry name" value="NUDIX"/>
    <property type="match status" value="1"/>
</dbReference>
<dbReference type="PROSITE" id="PS00893">
    <property type="entry name" value="NUDIX_BOX"/>
    <property type="match status" value="1"/>
</dbReference>
<feature type="chain" id="PRO_1000115264" description="RNA pyrophosphohydrolase">
    <location>
        <begin position="1"/>
        <end position="206"/>
    </location>
</feature>
<feature type="domain" description="Nudix hydrolase" evidence="1">
    <location>
        <begin position="6"/>
        <end position="150"/>
    </location>
</feature>
<feature type="region of interest" description="Disordered" evidence="2">
    <location>
        <begin position="162"/>
        <end position="206"/>
    </location>
</feature>
<feature type="short sequence motif" description="Nudix box">
    <location>
        <begin position="38"/>
        <end position="59"/>
    </location>
</feature>
<feature type="compositionally biased region" description="Basic and acidic residues" evidence="2">
    <location>
        <begin position="162"/>
        <end position="191"/>
    </location>
</feature>